<protein>
    <recommendedName>
        <fullName>Patatin-like phospholipase domain-containing protein SNOG_00918</fullName>
        <ecNumber>3.1.1.-</ecNumber>
    </recommendedName>
</protein>
<reference key="1">
    <citation type="journal article" date="2007" name="Plant Cell">
        <title>Dothideomycete-plant interactions illuminated by genome sequencing and EST analysis of the wheat pathogen Stagonospora nodorum.</title>
        <authorList>
            <person name="Hane J.K."/>
            <person name="Lowe R.G.T."/>
            <person name="Solomon P.S."/>
            <person name="Tan K.-C."/>
            <person name="Schoch C.L."/>
            <person name="Spatafora J.W."/>
            <person name="Crous P.W."/>
            <person name="Kodira C.D."/>
            <person name="Birren B.W."/>
            <person name="Galagan J.E."/>
            <person name="Torriani S.F.F."/>
            <person name="McDonald B.A."/>
            <person name="Oliver R.P."/>
        </authorList>
    </citation>
    <scope>NUCLEOTIDE SEQUENCE [LARGE SCALE GENOMIC DNA]</scope>
    <source>
        <strain>SN15 / ATCC MYA-4574 / FGSC 10173</strain>
    </source>
</reference>
<dbReference type="EC" id="3.1.1.-"/>
<dbReference type="EMBL" id="CH445325">
    <property type="protein sequence ID" value="EAT92413.2"/>
    <property type="molecule type" value="Genomic_DNA"/>
</dbReference>
<dbReference type="RefSeq" id="XP_001791585.1">
    <property type="nucleotide sequence ID" value="XM_001791533.1"/>
</dbReference>
<dbReference type="SMR" id="Q0V4Z6"/>
<dbReference type="EnsemblFungi" id="SNOT_00918">
    <property type="protein sequence ID" value="SNOT_00918"/>
    <property type="gene ID" value="SNOG_00918"/>
</dbReference>
<dbReference type="GeneID" id="5968394"/>
<dbReference type="KEGG" id="pno:SNOG_00918"/>
<dbReference type="VEuPathDB" id="FungiDB:JI435_009180"/>
<dbReference type="eggNOG" id="KOG2214">
    <property type="taxonomic scope" value="Eukaryota"/>
</dbReference>
<dbReference type="HOGENOM" id="CLU_009031_2_1_1"/>
<dbReference type="InParanoid" id="Q0V4Z6"/>
<dbReference type="Proteomes" id="UP000001055">
    <property type="component" value="Unassembled WGS sequence"/>
</dbReference>
<dbReference type="GO" id="GO:0005811">
    <property type="term" value="C:lipid droplet"/>
    <property type="evidence" value="ECO:0007669"/>
    <property type="project" value="EnsemblFungi"/>
</dbReference>
<dbReference type="GO" id="GO:0016020">
    <property type="term" value="C:membrane"/>
    <property type="evidence" value="ECO:0007669"/>
    <property type="project" value="UniProtKB-SubCell"/>
</dbReference>
<dbReference type="GO" id="GO:0004806">
    <property type="term" value="F:triacylglycerol lipase activity"/>
    <property type="evidence" value="ECO:0007669"/>
    <property type="project" value="EnsemblFungi"/>
</dbReference>
<dbReference type="GO" id="GO:1990748">
    <property type="term" value="P:cellular detoxification"/>
    <property type="evidence" value="ECO:0007669"/>
    <property type="project" value="EnsemblFungi"/>
</dbReference>
<dbReference type="GO" id="GO:0016042">
    <property type="term" value="P:lipid catabolic process"/>
    <property type="evidence" value="ECO:0007669"/>
    <property type="project" value="UniProtKB-KW"/>
</dbReference>
<dbReference type="GO" id="GO:0006642">
    <property type="term" value="P:triglyceride mobilization"/>
    <property type="evidence" value="ECO:0007669"/>
    <property type="project" value="EnsemblFungi"/>
</dbReference>
<dbReference type="CDD" id="cd07232">
    <property type="entry name" value="Pat_PLPL"/>
    <property type="match status" value="1"/>
</dbReference>
<dbReference type="Gene3D" id="3.40.1090.10">
    <property type="entry name" value="Cytosolic phospholipase A2 catalytic domain"/>
    <property type="match status" value="2"/>
</dbReference>
<dbReference type="InterPro" id="IPR016035">
    <property type="entry name" value="Acyl_Trfase/lysoPLipase"/>
</dbReference>
<dbReference type="InterPro" id="IPR050301">
    <property type="entry name" value="NTE"/>
</dbReference>
<dbReference type="InterPro" id="IPR002641">
    <property type="entry name" value="PNPLA_dom"/>
</dbReference>
<dbReference type="InterPro" id="IPR021771">
    <property type="entry name" value="Triacylglycerol_lipase_N"/>
</dbReference>
<dbReference type="PANTHER" id="PTHR14226">
    <property type="entry name" value="NEUROPATHY TARGET ESTERASE/SWISS CHEESE D.MELANOGASTER"/>
    <property type="match status" value="1"/>
</dbReference>
<dbReference type="PANTHER" id="PTHR14226:SF66">
    <property type="entry name" value="TRIACYLGLYCEROL LIPASE PTL2"/>
    <property type="match status" value="1"/>
</dbReference>
<dbReference type="Pfam" id="PF11815">
    <property type="entry name" value="DUF3336"/>
    <property type="match status" value="1"/>
</dbReference>
<dbReference type="Pfam" id="PF01734">
    <property type="entry name" value="Patatin"/>
    <property type="match status" value="1"/>
</dbReference>
<dbReference type="SUPFAM" id="SSF52151">
    <property type="entry name" value="FabD/lysophospholipase-like"/>
    <property type="match status" value="1"/>
</dbReference>
<dbReference type="PROSITE" id="PS51635">
    <property type="entry name" value="PNPLA"/>
    <property type="match status" value="1"/>
</dbReference>
<comment type="function">
    <text evidence="1">Probable lipid hydrolase.</text>
</comment>
<comment type="subcellular location">
    <subcellularLocation>
        <location evidence="5">Membrane</location>
        <topology evidence="5">Single-pass membrane protein</topology>
    </subcellularLocation>
</comment>
<comment type="similarity">
    <text evidence="5">Belongs to the PLPL family.</text>
</comment>
<gene>
    <name type="ORF">SNOG_00918</name>
</gene>
<accession>Q0V4Z6</accession>
<feature type="chain" id="PRO_0000295564" description="Patatin-like phospholipase domain-containing protein SNOG_00918">
    <location>
        <begin position="1"/>
        <end position="833"/>
    </location>
</feature>
<feature type="transmembrane region" description="Helical" evidence="2">
    <location>
        <begin position="108"/>
        <end position="128"/>
    </location>
</feature>
<feature type="domain" description="PNPLA" evidence="3">
    <location>
        <begin position="301"/>
        <end position="457"/>
    </location>
</feature>
<feature type="region of interest" description="Disordered" evidence="4">
    <location>
        <begin position="1"/>
        <end position="20"/>
    </location>
</feature>
<feature type="region of interest" description="Disordered" evidence="4">
    <location>
        <begin position="49"/>
        <end position="71"/>
    </location>
</feature>
<feature type="region of interest" description="Disordered" evidence="4">
    <location>
        <begin position="630"/>
        <end position="657"/>
    </location>
</feature>
<feature type="region of interest" description="Disordered" evidence="4">
    <location>
        <begin position="680"/>
        <end position="833"/>
    </location>
</feature>
<feature type="short sequence motif" description="GXSXG" evidence="3">
    <location>
        <begin position="332"/>
        <end position="336"/>
    </location>
</feature>
<feature type="compositionally biased region" description="Low complexity" evidence="4">
    <location>
        <begin position="644"/>
        <end position="655"/>
    </location>
</feature>
<feature type="compositionally biased region" description="Polar residues" evidence="4">
    <location>
        <begin position="689"/>
        <end position="707"/>
    </location>
</feature>
<feature type="compositionally biased region" description="Basic and acidic residues" evidence="4">
    <location>
        <begin position="740"/>
        <end position="750"/>
    </location>
</feature>
<feature type="compositionally biased region" description="Basic and acidic residues" evidence="4">
    <location>
        <begin position="759"/>
        <end position="769"/>
    </location>
</feature>
<feature type="compositionally biased region" description="Basic and acidic residues" evidence="4">
    <location>
        <begin position="782"/>
        <end position="794"/>
    </location>
</feature>
<feature type="compositionally biased region" description="Acidic residues" evidence="4">
    <location>
        <begin position="809"/>
        <end position="819"/>
    </location>
</feature>
<feature type="active site" description="Nucleophile" evidence="3">
    <location>
        <position position="334"/>
    </location>
</feature>
<feature type="active site" description="Proton acceptor" evidence="3">
    <location>
        <position position="444"/>
    </location>
</feature>
<keyword id="KW-0378">Hydrolase</keyword>
<keyword id="KW-0442">Lipid degradation</keyword>
<keyword id="KW-0443">Lipid metabolism</keyword>
<keyword id="KW-0472">Membrane</keyword>
<keyword id="KW-0812">Transmembrane</keyword>
<keyword id="KW-1133">Transmembrane helix</keyword>
<organism>
    <name type="scientific">Phaeosphaeria nodorum (strain SN15 / ATCC MYA-4574 / FGSC 10173)</name>
    <name type="common">Glume blotch fungus</name>
    <name type="synonym">Parastagonospora nodorum</name>
    <dbReference type="NCBI Taxonomy" id="321614"/>
    <lineage>
        <taxon>Eukaryota</taxon>
        <taxon>Fungi</taxon>
        <taxon>Dikarya</taxon>
        <taxon>Ascomycota</taxon>
        <taxon>Pezizomycotina</taxon>
        <taxon>Dothideomycetes</taxon>
        <taxon>Pleosporomycetidae</taxon>
        <taxon>Pleosporales</taxon>
        <taxon>Pleosporineae</taxon>
        <taxon>Phaeosphaeriaceae</taxon>
        <taxon>Parastagonospora</taxon>
    </lineage>
</organism>
<proteinExistence type="inferred from homology"/>
<name>PLPL_PHANO</name>
<sequence length="833" mass="94015">MTDVKKESDGPEPYSSSAFDFTLLPDYNNDFINEDDFAEFAKALAAPDHLSPSTEDLTAPQPETGKFSANNDWKPIHQRVRRRKKSKAPPRRGKDETREGFVYVLLKWPLLVVVLGWLLFLSIAYVFTRLYIYLYEHMVTWRGTRQKLRRQLQNASSYEEWIKCAQQLDTHLGSDDWKKNPSYSYYDSKTIRKVHEQLVKLRQRAESDETGKSTEKHVDGQPRAVEDLRALLEACIKNNFCGFENPRLYSETYYGTKDAVQSFIEEAEASLAFLLNSSQLDAENKRALFKHLGSNFGRTALCLSGGATFAYYHFGVAKALLDAGVLPEIITGTSGGALVAALLCTRTDEELKKVLVPALAGRITACHEDTWTWMKRWYATGARFDSVDWAKKCAWMTRGTPDCVVWSAVLASAAVPGILNPVVLMKKNRDGTLSPYSFGHKWKDGSLRTDIPLKALNLHFNVRFSIVSQVNPHINIFFFSSRGSVGRPVTHRRGRGWRGGFIGSATEQYLKLDLNKWLKVLRHLELLPRPLGQDWSEIWLQRFSGTITIWPKSIPSDFFYILTDPTPQRLARMIHVGQQSAFPKLKFIANRAKLEHLIQQGRRQYRPRGIREDIQAVLSEDDLQGLLKRTKSKSPSEEAIYPLSGSESSSSADFSRPGSPITLPLGFTFTRKNKKGLADLRTDPKALTDTPNSPSLSARLTGWWNTKSPRDSHPSTPKDPSRSLSPFTHHDRPNSMFELRPPKEVRDLQARTHGRPQHRNSDFLEEIRRRSSAFVEGEGSDDEGRAGRYRRGDVDAGAQDAEVYGEPAEFGDNEGDGEEVQSAVGLGLEGKGL</sequence>
<evidence type="ECO:0000250" key="1"/>
<evidence type="ECO:0000255" key="2"/>
<evidence type="ECO:0000255" key="3">
    <source>
        <dbReference type="PROSITE-ProRule" id="PRU01161"/>
    </source>
</evidence>
<evidence type="ECO:0000256" key="4">
    <source>
        <dbReference type="SAM" id="MobiDB-lite"/>
    </source>
</evidence>
<evidence type="ECO:0000305" key="5"/>